<accession>Q9PRM8</accession>
<accession>Q9PRM9</accession>
<accession>Q9PRN0</accession>
<proteinExistence type="evidence at protein level"/>
<name>VSPAA_CERCE</name>
<reference key="1">
    <citation type="journal article" date="1995" name="Eur. J. Biochem.">
        <title>Afaacytin, an alpha beta-fibrinogenase from Cerastes cerastes (horned viper) venom, activates purified factor X and induces serotonin release from human blood platelets.</title>
        <authorList>
            <person name="Laraba-Djebari F."/>
            <person name="Martin-Eauclaire M.-F."/>
            <person name="Mauco G."/>
            <person name="Marchot P."/>
        </authorList>
    </citation>
    <scope>PROTEIN SEQUENCE</scope>
    <scope>FUNCTION</scope>
    <scope>ACTIVITY REGULATION</scope>
    <scope>SUBUNIT</scope>
    <source>
        <tissue>Venom</tissue>
    </source>
</reference>
<comment type="function">
    <text evidence="2">Snake venom serine protease that exhibits alpha-fibrinase and beta-fibrinogenase activities. It replaces missing factors VIII (F8) and IX (F9) in deficient plasmas by activating purified human factor X (F10) into factor Xa. It releases serotonin from platelets and induces platelet aggregation in human (but not in rabbit). Has caseinolytic, arginine-esterase and amidase activities.</text>
</comment>
<comment type="activity regulation">
    <text evidence="2">Inhibited by diisopropylfluorophosphate (DFP), benzamidine, heparin and hirudin, but not by plasmatic thrombin inhibitors, antithrombin-III and ecotin.</text>
</comment>
<comment type="subunit">
    <text evidence="2">Heterodimer of an alpha and a beta chain. Subunit beta is constituted of two disulfide-linked polypeptidic chains, beta and beta'. Calcium appears to be required for structural cohesion of the molecule.</text>
</comment>
<comment type="subcellular location">
    <subcellularLocation>
        <location>Secreted</location>
    </subcellularLocation>
</comment>
<comment type="tissue specificity">
    <text>Expressed by the venom gland.</text>
</comment>
<comment type="PTM">
    <text>Both chains alpha and beta are N-glycosylated.</text>
</comment>
<comment type="similarity">
    <text evidence="1">Belongs to the peptidase S1 family. Snake venom subfamily.</text>
</comment>
<comment type="caution">
    <text evidence="3">As the three chains have the same N-terminal sequence, they are merged. The respective apparent molecular mass of the chains are 43000 (alpha), 35500 (beta) and 10200 (beta') as determined by SDS/PAGE under reducing conditions.</text>
</comment>
<protein>
    <recommendedName>
        <fullName>Snake venom serine protease Afaacytin alpha/beta/beta' chains</fullName>
        <shortName>SVSP</shortName>
        <ecNumber>3.4.21.-</ecNumber>
    </recommendedName>
</protein>
<feature type="chain" id="PRO_0000294993" description="Snake venom serine protease Afaacytin alpha/beta/beta' chains">
    <location>
        <begin position="1"/>
        <end position="27" status="greater than"/>
    </location>
</feature>
<feature type="domain" description="Peptidase S1" evidence="1">
    <location>
        <begin position="1"/>
        <end position="27" status="greater than"/>
    </location>
</feature>
<feature type="disulfide bond">
    <location>
        <begin position="7"/>
        <end status="unknown"/>
    </location>
</feature>
<feature type="non-terminal residue">
    <location>
        <position position="27"/>
    </location>
</feature>
<keyword id="KW-1204">Blood coagulation cascade activating toxin</keyword>
<keyword id="KW-0903">Direct protein sequencing</keyword>
<keyword id="KW-1015">Disulfide bond</keyword>
<keyword id="KW-1206">Fibrinogenolytic toxin</keyword>
<keyword id="KW-1205">Fibrinolytic toxin</keyword>
<keyword id="KW-0325">Glycoprotein</keyword>
<keyword id="KW-1199">Hemostasis impairing toxin</keyword>
<keyword id="KW-0378">Hydrolase</keyword>
<keyword id="KW-1202">Platelet aggregation activating toxin</keyword>
<keyword id="KW-0645">Protease</keyword>
<keyword id="KW-0964">Secreted</keyword>
<keyword id="KW-0720">Serine protease</keyword>
<keyword id="KW-0800">Toxin</keyword>
<organism>
    <name type="scientific">Cerastes cerastes</name>
    <name type="common">Horned desert viper</name>
    <dbReference type="NCBI Taxonomy" id="8697"/>
    <lineage>
        <taxon>Eukaryota</taxon>
        <taxon>Metazoa</taxon>
        <taxon>Chordata</taxon>
        <taxon>Craniata</taxon>
        <taxon>Vertebrata</taxon>
        <taxon>Euteleostomi</taxon>
        <taxon>Lepidosauria</taxon>
        <taxon>Squamata</taxon>
        <taxon>Bifurcata</taxon>
        <taxon>Unidentata</taxon>
        <taxon>Episquamata</taxon>
        <taxon>Toxicofera</taxon>
        <taxon>Serpentes</taxon>
        <taxon>Colubroidea</taxon>
        <taxon>Viperidae</taxon>
        <taxon>Viperinae</taxon>
        <taxon>Cerastes</taxon>
    </lineage>
</organism>
<dbReference type="EC" id="3.4.21.-"/>
<dbReference type="PIR" id="S63486">
    <property type="entry name" value="S63486"/>
</dbReference>
<dbReference type="PIR" id="S63487">
    <property type="entry name" value="S63487"/>
</dbReference>
<dbReference type="GO" id="GO:0005576">
    <property type="term" value="C:extracellular region"/>
    <property type="evidence" value="ECO:0007669"/>
    <property type="project" value="UniProtKB-SubCell"/>
</dbReference>
<dbReference type="GO" id="GO:0008236">
    <property type="term" value="F:serine-type peptidase activity"/>
    <property type="evidence" value="ECO:0007669"/>
    <property type="project" value="UniProtKB-KW"/>
</dbReference>
<dbReference type="GO" id="GO:0090729">
    <property type="term" value="F:toxin activity"/>
    <property type="evidence" value="ECO:0007669"/>
    <property type="project" value="UniProtKB-KW"/>
</dbReference>
<dbReference type="GO" id="GO:0006508">
    <property type="term" value="P:proteolysis"/>
    <property type="evidence" value="ECO:0007669"/>
    <property type="project" value="UniProtKB-KW"/>
</dbReference>
<evidence type="ECO:0000255" key="1">
    <source>
        <dbReference type="PROSITE-ProRule" id="PRU00274"/>
    </source>
</evidence>
<evidence type="ECO:0000269" key="2">
    <source>
    </source>
</evidence>
<evidence type="ECO:0000305" key="3"/>
<sequence length="27" mass="2918">VIGGAECNINEHRSLVLLYXSSSXFGE</sequence>